<dbReference type="EC" id="5.3.1.4" evidence="1"/>
<dbReference type="EMBL" id="AP006627">
    <property type="protein sequence ID" value="BAD62950.1"/>
    <property type="molecule type" value="Genomic_DNA"/>
</dbReference>
<dbReference type="RefSeq" id="WP_011245269.1">
    <property type="nucleotide sequence ID" value="NC_006582.1"/>
</dbReference>
<dbReference type="SMR" id="Q5WL05"/>
<dbReference type="STRING" id="66692.ABC0408"/>
<dbReference type="KEGG" id="bcl:ABC0408"/>
<dbReference type="eggNOG" id="COG2160">
    <property type="taxonomic scope" value="Bacteria"/>
</dbReference>
<dbReference type="HOGENOM" id="CLU_045663_0_0_9"/>
<dbReference type="OrthoDB" id="9765600at2"/>
<dbReference type="UniPathway" id="UPA00145">
    <property type="reaction ID" value="UER00565"/>
</dbReference>
<dbReference type="Proteomes" id="UP000001168">
    <property type="component" value="Chromosome"/>
</dbReference>
<dbReference type="GO" id="GO:0005829">
    <property type="term" value="C:cytosol"/>
    <property type="evidence" value="ECO:0007669"/>
    <property type="project" value="TreeGrafter"/>
</dbReference>
<dbReference type="GO" id="GO:0008733">
    <property type="term" value="F:L-arabinose isomerase activity"/>
    <property type="evidence" value="ECO:0007669"/>
    <property type="project" value="UniProtKB-UniRule"/>
</dbReference>
<dbReference type="GO" id="GO:0030145">
    <property type="term" value="F:manganese ion binding"/>
    <property type="evidence" value="ECO:0007669"/>
    <property type="project" value="UniProtKB-UniRule"/>
</dbReference>
<dbReference type="GO" id="GO:0019569">
    <property type="term" value="P:L-arabinose catabolic process to xylulose 5-phosphate"/>
    <property type="evidence" value="ECO:0007669"/>
    <property type="project" value="UniProtKB-UniRule"/>
</dbReference>
<dbReference type="CDD" id="cd03557">
    <property type="entry name" value="L-arabinose_isomerase"/>
    <property type="match status" value="1"/>
</dbReference>
<dbReference type="Gene3D" id="3.40.50.10940">
    <property type="match status" value="1"/>
</dbReference>
<dbReference type="HAMAP" id="MF_00519">
    <property type="entry name" value="Arabinose_Isome"/>
    <property type="match status" value="1"/>
</dbReference>
<dbReference type="InterPro" id="IPR024664">
    <property type="entry name" value="Ara_Isoase_C"/>
</dbReference>
<dbReference type="InterPro" id="IPR055390">
    <property type="entry name" value="AraA_central"/>
</dbReference>
<dbReference type="InterPro" id="IPR055389">
    <property type="entry name" value="AraA_N"/>
</dbReference>
<dbReference type="InterPro" id="IPR038583">
    <property type="entry name" value="AraA_N_sf"/>
</dbReference>
<dbReference type="InterPro" id="IPR004216">
    <property type="entry name" value="Fuc/Ara_isomerase_C"/>
</dbReference>
<dbReference type="InterPro" id="IPR009015">
    <property type="entry name" value="Fucose_isomerase_N/cen_sf"/>
</dbReference>
<dbReference type="InterPro" id="IPR003762">
    <property type="entry name" value="Lara_isomerase"/>
</dbReference>
<dbReference type="NCBIfam" id="NF002795">
    <property type="entry name" value="PRK02929.1"/>
    <property type="match status" value="1"/>
</dbReference>
<dbReference type="PANTHER" id="PTHR38464">
    <property type="entry name" value="L-ARABINOSE ISOMERASE"/>
    <property type="match status" value="1"/>
</dbReference>
<dbReference type="PANTHER" id="PTHR38464:SF1">
    <property type="entry name" value="L-ARABINOSE ISOMERASE"/>
    <property type="match status" value="1"/>
</dbReference>
<dbReference type="Pfam" id="PF24856">
    <property type="entry name" value="AraA_central"/>
    <property type="match status" value="1"/>
</dbReference>
<dbReference type="Pfam" id="PF02610">
    <property type="entry name" value="AraA_N"/>
    <property type="match status" value="1"/>
</dbReference>
<dbReference type="Pfam" id="PF11762">
    <property type="entry name" value="Arabinose_Iso_C"/>
    <property type="match status" value="1"/>
</dbReference>
<dbReference type="PIRSF" id="PIRSF001478">
    <property type="entry name" value="L-ara_isomerase"/>
    <property type="match status" value="1"/>
</dbReference>
<dbReference type="SUPFAM" id="SSF50443">
    <property type="entry name" value="FucI/AraA C-terminal domain-like"/>
    <property type="match status" value="1"/>
</dbReference>
<dbReference type="SUPFAM" id="SSF53743">
    <property type="entry name" value="FucI/AraA N-terminal and middle domains"/>
    <property type="match status" value="1"/>
</dbReference>
<gene>
    <name evidence="1" type="primary">araA</name>
    <name type="ordered locus">ABC0408</name>
</gene>
<comment type="function">
    <text evidence="1">Catalyzes the conversion of L-arabinose to L-ribulose.</text>
</comment>
<comment type="catalytic activity">
    <reaction evidence="1">
        <text>beta-L-arabinopyranose = L-ribulose</text>
        <dbReference type="Rhea" id="RHEA:14821"/>
        <dbReference type="ChEBI" id="CHEBI:16880"/>
        <dbReference type="ChEBI" id="CHEBI:40886"/>
        <dbReference type="EC" id="5.3.1.4"/>
    </reaction>
</comment>
<comment type="cofactor">
    <cofactor evidence="1">
        <name>Mn(2+)</name>
        <dbReference type="ChEBI" id="CHEBI:29035"/>
    </cofactor>
    <text evidence="1">Binds 1 Mn(2+) ion per subunit.</text>
</comment>
<comment type="pathway">
    <text evidence="1">Carbohydrate degradation; L-arabinose degradation via L-ribulose; D-xylulose 5-phosphate from L-arabinose (bacterial route): step 1/3.</text>
</comment>
<comment type="similarity">
    <text evidence="1">Belongs to the arabinose isomerase family.</text>
</comment>
<proteinExistence type="inferred from homology"/>
<keyword id="KW-0054">Arabinose catabolism</keyword>
<keyword id="KW-0119">Carbohydrate metabolism</keyword>
<keyword id="KW-0413">Isomerase</keyword>
<keyword id="KW-0464">Manganese</keyword>
<keyword id="KW-0479">Metal-binding</keyword>
<keyword id="KW-1185">Reference proteome</keyword>
<accession>Q5WL05</accession>
<protein>
    <recommendedName>
        <fullName evidence="1">L-arabinose isomerase</fullName>
        <ecNumber evidence="1">5.3.1.4</ecNumber>
    </recommendedName>
</protein>
<organism>
    <name type="scientific">Shouchella clausii (strain KSM-K16)</name>
    <name type="common">Alkalihalobacillus clausii</name>
    <dbReference type="NCBI Taxonomy" id="66692"/>
    <lineage>
        <taxon>Bacteria</taxon>
        <taxon>Bacillati</taxon>
        <taxon>Bacillota</taxon>
        <taxon>Bacilli</taxon>
        <taxon>Bacillales</taxon>
        <taxon>Bacillaceae</taxon>
        <taxon>Shouchella</taxon>
    </lineage>
</organism>
<reference key="1">
    <citation type="submission" date="2003-10" db="EMBL/GenBank/DDBJ databases">
        <title>The complete genome sequence of the alkaliphilic Bacillus clausii KSM-K16.</title>
        <authorList>
            <person name="Takaki Y."/>
            <person name="Kageyama Y."/>
            <person name="Shimamura S."/>
            <person name="Suzuki H."/>
            <person name="Nishi S."/>
            <person name="Hatada Y."/>
            <person name="Kawai S."/>
            <person name="Ito S."/>
            <person name="Horikoshi K."/>
        </authorList>
    </citation>
    <scope>NUCLEOTIDE SEQUENCE [LARGE SCALE GENOMIC DNA]</scope>
    <source>
        <strain>KSM-K16</strain>
    </source>
</reference>
<name>ARAA_SHOC1</name>
<evidence type="ECO:0000255" key="1">
    <source>
        <dbReference type="HAMAP-Rule" id="MF_00519"/>
    </source>
</evidence>
<sequence length="486" mass="54729">MHKQGKYQFWFITGSQPLYGQEALDEVAAHSKAMVERLKEKLPEELVLKPVASSPERILELFRAANGDNNCAGIITWMHTFSPAKMWIAGLNELNKPMLHFHTQYNRDIPWGDIDMDFMNLNQSAHGDREFGFMVSRMNIDRKVVAGHWQDARVMKRIGDWMKTVNAYQESKQLKIARFGDNMREVAVTEGDKVEAQIKLGWSVSGFGIGDLVEVINSVSTEEVNALMDEYRSLYTFHRDANIAAVEEQARIEIGIERFLQQGDFRAFSTTFEDLHGMKQLPGLAVQRLMAKGYGFAGEGDWKTAALLRVLKVLAGNVGTSFMEDYTNHLEPGQEMILGSHMLEVCPTISAQKPEIVVAPLSMGNREDPARLVFKGKAGRALNAALIDMGSRFRLVANEVEAVENPHDMPKLPVASVLWKPLPSFSEATEAWIYAGGAHHTVFSYEISKEQLADWASLMGIECIVIDDQSNVGQVRKELFWNRRAY</sequence>
<feature type="chain" id="PRO_0000198380" description="L-arabinose isomerase">
    <location>
        <begin position="1"/>
        <end position="486"/>
    </location>
</feature>
<feature type="binding site" evidence="1">
    <location>
        <position position="299"/>
    </location>
    <ligand>
        <name>Mn(2+)</name>
        <dbReference type="ChEBI" id="CHEBI:29035"/>
    </ligand>
</feature>
<feature type="binding site" evidence="1">
    <location>
        <position position="324"/>
    </location>
    <ligand>
        <name>Mn(2+)</name>
        <dbReference type="ChEBI" id="CHEBI:29035"/>
    </ligand>
</feature>
<feature type="binding site" evidence="1">
    <location>
        <position position="341"/>
    </location>
    <ligand>
        <name>Mn(2+)</name>
        <dbReference type="ChEBI" id="CHEBI:29035"/>
    </ligand>
</feature>
<feature type="binding site" evidence="1">
    <location>
        <position position="440"/>
    </location>
    <ligand>
        <name>Mn(2+)</name>
        <dbReference type="ChEBI" id="CHEBI:29035"/>
    </ligand>
</feature>